<evidence type="ECO:0000255" key="1">
    <source>
        <dbReference type="HAMAP-Rule" id="MF_00163"/>
    </source>
</evidence>
<gene>
    <name evidence="1" type="primary">def</name>
    <name type="ordered locus">BUAPTUC7_490</name>
</gene>
<comment type="function">
    <text evidence="1">Removes the formyl group from the N-terminal Met of newly synthesized proteins. Requires at least a dipeptide for an efficient rate of reaction. N-terminal L-methionine is a prerequisite for activity but the enzyme has broad specificity at other positions.</text>
</comment>
<comment type="catalytic activity">
    <reaction evidence="1">
        <text>N-terminal N-formyl-L-methionyl-[peptide] + H2O = N-terminal L-methionyl-[peptide] + formate</text>
        <dbReference type="Rhea" id="RHEA:24420"/>
        <dbReference type="Rhea" id="RHEA-COMP:10639"/>
        <dbReference type="Rhea" id="RHEA-COMP:10640"/>
        <dbReference type="ChEBI" id="CHEBI:15377"/>
        <dbReference type="ChEBI" id="CHEBI:15740"/>
        <dbReference type="ChEBI" id="CHEBI:49298"/>
        <dbReference type="ChEBI" id="CHEBI:64731"/>
        <dbReference type="EC" id="3.5.1.88"/>
    </reaction>
</comment>
<comment type="cofactor">
    <cofactor evidence="1">
        <name>Fe(2+)</name>
        <dbReference type="ChEBI" id="CHEBI:29033"/>
    </cofactor>
    <text evidence="1">Binds 1 Fe(2+) ion.</text>
</comment>
<comment type="similarity">
    <text evidence="1">Belongs to the polypeptide deformylase family.</text>
</comment>
<keyword id="KW-0378">Hydrolase</keyword>
<keyword id="KW-0408">Iron</keyword>
<keyword id="KW-0479">Metal-binding</keyword>
<keyword id="KW-0648">Protein biosynthesis</keyword>
<organism>
    <name type="scientific">Buchnera aphidicola subsp. Acyrthosiphon pisum (strain Tuc7)</name>
    <dbReference type="NCBI Taxonomy" id="561501"/>
    <lineage>
        <taxon>Bacteria</taxon>
        <taxon>Pseudomonadati</taxon>
        <taxon>Pseudomonadota</taxon>
        <taxon>Gammaproteobacteria</taxon>
        <taxon>Enterobacterales</taxon>
        <taxon>Erwiniaceae</taxon>
        <taxon>Buchnera</taxon>
    </lineage>
</organism>
<accession>B8D821</accession>
<dbReference type="EC" id="3.5.1.88" evidence="1"/>
<dbReference type="EMBL" id="CP001158">
    <property type="protein sequence ID" value="ACL30286.1"/>
    <property type="molecule type" value="Genomic_DNA"/>
</dbReference>
<dbReference type="RefSeq" id="WP_009874447.1">
    <property type="nucleotide sequence ID" value="NC_011834.1"/>
</dbReference>
<dbReference type="SMR" id="B8D821"/>
<dbReference type="KEGG" id="bau:BUAPTUC7_490"/>
<dbReference type="HOGENOM" id="CLU_061901_2_1_6"/>
<dbReference type="GO" id="GO:0046872">
    <property type="term" value="F:metal ion binding"/>
    <property type="evidence" value="ECO:0007669"/>
    <property type="project" value="UniProtKB-KW"/>
</dbReference>
<dbReference type="GO" id="GO:0042586">
    <property type="term" value="F:peptide deformylase activity"/>
    <property type="evidence" value="ECO:0007669"/>
    <property type="project" value="UniProtKB-UniRule"/>
</dbReference>
<dbReference type="GO" id="GO:0043686">
    <property type="term" value="P:co-translational protein modification"/>
    <property type="evidence" value="ECO:0007669"/>
    <property type="project" value="TreeGrafter"/>
</dbReference>
<dbReference type="GO" id="GO:0006412">
    <property type="term" value="P:translation"/>
    <property type="evidence" value="ECO:0007669"/>
    <property type="project" value="UniProtKB-UniRule"/>
</dbReference>
<dbReference type="CDD" id="cd00487">
    <property type="entry name" value="Pep_deformylase"/>
    <property type="match status" value="1"/>
</dbReference>
<dbReference type="FunFam" id="3.90.45.10:FF:000001">
    <property type="entry name" value="Peptide deformylase"/>
    <property type="match status" value="1"/>
</dbReference>
<dbReference type="Gene3D" id="3.90.45.10">
    <property type="entry name" value="Peptide deformylase"/>
    <property type="match status" value="1"/>
</dbReference>
<dbReference type="HAMAP" id="MF_00163">
    <property type="entry name" value="Pep_deformylase"/>
    <property type="match status" value="1"/>
</dbReference>
<dbReference type="InterPro" id="IPR023635">
    <property type="entry name" value="Peptide_deformylase"/>
</dbReference>
<dbReference type="InterPro" id="IPR036821">
    <property type="entry name" value="Peptide_deformylase_sf"/>
</dbReference>
<dbReference type="NCBIfam" id="TIGR00079">
    <property type="entry name" value="pept_deformyl"/>
    <property type="match status" value="1"/>
</dbReference>
<dbReference type="NCBIfam" id="NF001159">
    <property type="entry name" value="PRK00150.1-3"/>
    <property type="match status" value="1"/>
</dbReference>
<dbReference type="PANTHER" id="PTHR10458">
    <property type="entry name" value="PEPTIDE DEFORMYLASE"/>
    <property type="match status" value="1"/>
</dbReference>
<dbReference type="PANTHER" id="PTHR10458:SF22">
    <property type="entry name" value="PEPTIDE DEFORMYLASE"/>
    <property type="match status" value="1"/>
</dbReference>
<dbReference type="Pfam" id="PF01327">
    <property type="entry name" value="Pep_deformylase"/>
    <property type="match status" value="1"/>
</dbReference>
<dbReference type="PIRSF" id="PIRSF004749">
    <property type="entry name" value="Pep_def"/>
    <property type="match status" value="1"/>
</dbReference>
<dbReference type="PRINTS" id="PR01576">
    <property type="entry name" value="PDEFORMYLASE"/>
</dbReference>
<dbReference type="SUPFAM" id="SSF56420">
    <property type="entry name" value="Peptide deformylase"/>
    <property type="match status" value="1"/>
</dbReference>
<reference key="1">
    <citation type="journal article" date="2009" name="Science">
        <title>The dynamics and time scale of ongoing genomic erosion in symbiotic bacteria.</title>
        <authorList>
            <person name="Moran N.A."/>
            <person name="McLaughlin H.J."/>
            <person name="Sorek R."/>
        </authorList>
    </citation>
    <scope>NUCLEOTIDE SEQUENCE [LARGE SCALE GENOMIC DNA]</scope>
    <source>
        <strain>Tuc7</strain>
    </source>
</reference>
<protein>
    <recommendedName>
        <fullName evidence="1">Peptide deformylase</fullName>
        <shortName evidence="1">PDF</shortName>
        <ecNumber evidence="1">3.5.1.88</ecNumber>
    </recommendedName>
    <alternativeName>
        <fullName evidence="1">Polypeptide deformylase</fullName>
    </alternativeName>
</protein>
<proteinExistence type="inferred from homology"/>
<feature type="chain" id="PRO_1000200718" description="Peptide deformylase">
    <location>
        <begin position="1"/>
        <end position="173"/>
    </location>
</feature>
<feature type="active site" evidence="1">
    <location>
        <position position="134"/>
    </location>
</feature>
<feature type="binding site" evidence="1">
    <location>
        <position position="91"/>
    </location>
    <ligand>
        <name>Fe cation</name>
        <dbReference type="ChEBI" id="CHEBI:24875"/>
    </ligand>
</feature>
<feature type="binding site" evidence="1">
    <location>
        <position position="133"/>
    </location>
    <ligand>
        <name>Fe cation</name>
        <dbReference type="ChEBI" id="CHEBI:24875"/>
    </ligand>
</feature>
<feature type="binding site" evidence="1">
    <location>
        <position position="137"/>
    </location>
    <ligand>
        <name>Fe cation</name>
        <dbReference type="ChEBI" id="CHEBI:24875"/>
    </ligand>
</feature>
<name>DEF_BUCAT</name>
<sequence>MSLLKILYYPDIRLRILAKPVKEINKKIQKIANDMIDTMYQEEGIGLAATQVNIPLQIIVVNTMEQKKNNLVLINPKIIKKEGDISIEEGCLSIPEYQASIPRSNYIQVQAVNLDGEKIEIEAKSILSICIQHEIDHLKGKLFIDYLSKFKRERIQKKFEKINKKNKKFSIKE</sequence>